<proteinExistence type="inferred from homology"/>
<reference key="1">
    <citation type="journal article" date="2004" name="Genome Res.">
        <title>The genome sequence of Mycoplasma mycoides subsp. mycoides SC type strain PG1T, the causative agent of contagious bovine pleuropneumonia (CBPP).</title>
        <authorList>
            <person name="Westberg J."/>
            <person name="Persson A."/>
            <person name="Holmberg A."/>
            <person name="Goesmann A."/>
            <person name="Lundeberg J."/>
            <person name="Johansson K.-E."/>
            <person name="Pettersson B."/>
            <person name="Uhlen M."/>
        </authorList>
    </citation>
    <scope>NUCLEOTIDE SEQUENCE [LARGE SCALE GENOMIC DNA]</scope>
    <source>
        <strain>CCUG 32753 / NCTC 10114 / PG1</strain>
    </source>
</reference>
<name>RS13_MYCMS</name>
<protein>
    <recommendedName>
        <fullName evidence="1">Small ribosomal subunit protein uS13</fullName>
    </recommendedName>
    <alternativeName>
        <fullName evidence="3">30S ribosomal protein S13</fullName>
    </alternativeName>
</protein>
<organism>
    <name type="scientific">Mycoplasma mycoides subsp. mycoides SC (strain CCUG 32753 / NCTC 10114 / PG1)</name>
    <dbReference type="NCBI Taxonomy" id="272632"/>
    <lineage>
        <taxon>Bacteria</taxon>
        <taxon>Bacillati</taxon>
        <taxon>Mycoplasmatota</taxon>
        <taxon>Mollicutes</taxon>
        <taxon>Mycoplasmataceae</taxon>
        <taxon>Mycoplasma</taxon>
    </lineage>
</organism>
<evidence type="ECO:0000255" key="1">
    <source>
        <dbReference type="HAMAP-Rule" id="MF_01315"/>
    </source>
</evidence>
<evidence type="ECO:0000256" key="2">
    <source>
        <dbReference type="SAM" id="MobiDB-lite"/>
    </source>
</evidence>
<evidence type="ECO:0000305" key="3"/>
<keyword id="KW-1185">Reference proteome</keyword>
<keyword id="KW-0687">Ribonucleoprotein</keyword>
<keyword id="KW-0689">Ribosomal protein</keyword>
<keyword id="KW-0694">RNA-binding</keyword>
<keyword id="KW-0699">rRNA-binding</keyword>
<keyword id="KW-0820">tRNA-binding</keyword>
<dbReference type="EMBL" id="BX293980">
    <property type="protein sequence ID" value="CAE77341.1"/>
    <property type="molecule type" value="Genomic_DNA"/>
</dbReference>
<dbReference type="RefSeq" id="NP_975699.1">
    <property type="nucleotide sequence ID" value="NC_005364.2"/>
</dbReference>
<dbReference type="RefSeq" id="WP_011166891.1">
    <property type="nucleotide sequence ID" value="NC_005364.2"/>
</dbReference>
<dbReference type="SMR" id="Q6MSP7"/>
<dbReference type="STRING" id="272632.MSC_0723"/>
<dbReference type="KEGG" id="mmy:MSC_0723"/>
<dbReference type="PATRIC" id="fig|272632.4.peg.778"/>
<dbReference type="eggNOG" id="COG0099">
    <property type="taxonomic scope" value="Bacteria"/>
</dbReference>
<dbReference type="HOGENOM" id="CLU_103849_1_2_14"/>
<dbReference type="Proteomes" id="UP000001016">
    <property type="component" value="Chromosome"/>
</dbReference>
<dbReference type="GO" id="GO:0005829">
    <property type="term" value="C:cytosol"/>
    <property type="evidence" value="ECO:0007669"/>
    <property type="project" value="TreeGrafter"/>
</dbReference>
<dbReference type="GO" id="GO:0015935">
    <property type="term" value="C:small ribosomal subunit"/>
    <property type="evidence" value="ECO:0007669"/>
    <property type="project" value="TreeGrafter"/>
</dbReference>
<dbReference type="GO" id="GO:0019843">
    <property type="term" value="F:rRNA binding"/>
    <property type="evidence" value="ECO:0007669"/>
    <property type="project" value="UniProtKB-UniRule"/>
</dbReference>
<dbReference type="GO" id="GO:0003735">
    <property type="term" value="F:structural constituent of ribosome"/>
    <property type="evidence" value="ECO:0007669"/>
    <property type="project" value="InterPro"/>
</dbReference>
<dbReference type="GO" id="GO:0000049">
    <property type="term" value="F:tRNA binding"/>
    <property type="evidence" value="ECO:0007669"/>
    <property type="project" value="UniProtKB-UniRule"/>
</dbReference>
<dbReference type="GO" id="GO:0006412">
    <property type="term" value="P:translation"/>
    <property type="evidence" value="ECO:0007669"/>
    <property type="project" value="UniProtKB-UniRule"/>
</dbReference>
<dbReference type="FunFam" id="1.10.8.50:FF:000001">
    <property type="entry name" value="30S ribosomal protein S13"/>
    <property type="match status" value="1"/>
</dbReference>
<dbReference type="FunFam" id="4.10.910.10:FF:000001">
    <property type="entry name" value="30S ribosomal protein S13"/>
    <property type="match status" value="1"/>
</dbReference>
<dbReference type="Gene3D" id="1.10.8.50">
    <property type="match status" value="1"/>
</dbReference>
<dbReference type="Gene3D" id="4.10.910.10">
    <property type="entry name" value="30s ribosomal protein s13, domain 2"/>
    <property type="match status" value="1"/>
</dbReference>
<dbReference type="HAMAP" id="MF_01315">
    <property type="entry name" value="Ribosomal_uS13"/>
    <property type="match status" value="1"/>
</dbReference>
<dbReference type="InterPro" id="IPR027437">
    <property type="entry name" value="Rbsml_uS13_C"/>
</dbReference>
<dbReference type="InterPro" id="IPR001892">
    <property type="entry name" value="Ribosomal_uS13"/>
</dbReference>
<dbReference type="InterPro" id="IPR010979">
    <property type="entry name" value="Ribosomal_uS13-like_H2TH"/>
</dbReference>
<dbReference type="InterPro" id="IPR019980">
    <property type="entry name" value="Ribosomal_uS13_bac-type"/>
</dbReference>
<dbReference type="InterPro" id="IPR018269">
    <property type="entry name" value="Ribosomal_uS13_CS"/>
</dbReference>
<dbReference type="NCBIfam" id="TIGR03631">
    <property type="entry name" value="uS13_bact"/>
    <property type="match status" value="1"/>
</dbReference>
<dbReference type="PANTHER" id="PTHR10871">
    <property type="entry name" value="30S RIBOSOMAL PROTEIN S13/40S RIBOSOMAL PROTEIN S18"/>
    <property type="match status" value="1"/>
</dbReference>
<dbReference type="PANTHER" id="PTHR10871:SF1">
    <property type="entry name" value="SMALL RIBOSOMAL SUBUNIT PROTEIN US13M"/>
    <property type="match status" value="1"/>
</dbReference>
<dbReference type="Pfam" id="PF00416">
    <property type="entry name" value="Ribosomal_S13"/>
    <property type="match status" value="1"/>
</dbReference>
<dbReference type="PIRSF" id="PIRSF002134">
    <property type="entry name" value="Ribosomal_S13"/>
    <property type="match status" value="1"/>
</dbReference>
<dbReference type="SUPFAM" id="SSF46946">
    <property type="entry name" value="S13-like H2TH domain"/>
    <property type="match status" value="1"/>
</dbReference>
<dbReference type="PROSITE" id="PS00646">
    <property type="entry name" value="RIBOSOMAL_S13_1"/>
    <property type="match status" value="1"/>
</dbReference>
<dbReference type="PROSITE" id="PS50159">
    <property type="entry name" value="RIBOSOMAL_S13_2"/>
    <property type="match status" value="1"/>
</dbReference>
<gene>
    <name evidence="1" type="primary">rpsM</name>
    <name type="ordered locus">MSC_0723</name>
</gene>
<comment type="function">
    <text evidence="1">Located at the top of the head of the 30S subunit, it contacts several helices of the 16S rRNA. In the 70S ribosome it contacts the 23S rRNA (bridge B1a) and protein L5 of the 50S subunit (bridge B1b), connecting the 2 subunits; these bridges are implicated in subunit movement. Contacts the tRNAs in the A and P-sites.</text>
</comment>
<comment type="subunit">
    <text evidence="1">Part of the 30S ribosomal subunit. Forms a loose heterodimer with protein S19. Forms two bridges to the 50S subunit in the 70S ribosome.</text>
</comment>
<comment type="similarity">
    <text evidence="1">Belongs to the universal ribosomal protein uS13 family.</text>
</comment>
<feature type="chain" id="PRO_0000230529" description="Small ribosomal subunit protein uS13">
    <location>
        <begin position="1"/>
        <end position="121"/>
    </location>
</feature>
<feature type="region of interest" description="Disordered" evidence="2">
    <location>
        <begin position="92"/>
        <end position="121"/>
    </location>
</feature>
<feature type="compositionally biased region" description="Basic residues" evidence="2">
    <location>
        <begin position="110"/>
        <end position="121"/>
    </location>
</feature>
<accession>Q6MSP7</accession>
<sequence length="121" mass="13678">MARISGVEIPNNKRVVVSLTYIYGIGLPTAQSVLKTLNISEDIRVKDLTEEQIKNISMEISKYKTEGKLRREVSLNIKRLMEIGSYRGLRHRKGLPVRGQSSKTNARTVKGPRKTVANKKK</sequence>